<sequence>MRSTYILIIVPLIIIGGGVVADNTNETPVLAHSSDEQPHQRLTYYNWDHKDLGTSAFEDLPPLQDQPTPLPIDQSDRCPDGWLRYSDSCYFIETESLGFAKAERKCHDKQATLFVANSMEEWDAVRDHAEKSVLSWIGLVRFSHYERLEQLPRWQTTGSINPSKINWLIKPFKPVVNGWSSYANCAASFQSPTEVESASYTFFYPCTMAFKSICERNSTILNARN</sequence>
<comment type="subcellular location">
    <subcellularLocation>
        <location evidence="5">Secreted</location>
    </subcellularLocation>
</comment>
<proteinExistence type="evidence at protein level"/>
<accession>Q94417</accession>
<gene>
    <name type="primary">clec-91</name>
    <name type="ORF">ZK858.3</name>
</gene>
<name>CLC91_CAEEL</name>
<protein>
    <recommendedName>
        <fullName>C-type lectin domain-containing protein 91</fullName>
    </recommendedName>
</protein>
<evidence type="ECO:0000255" key="1"/>
<evidence type="ECO:0000255" key="2">
    <source>
        <dbReference type="PROSITE-ProRule" id="PRU00040"/>
    </source>
</evidence>
<evidence type="ECO:0000269" key="3">
    <source>
    </source>
</evidence>
<evidence type="ECO:0000269" key="4">
    <source>
    </source>
</evidence>
<evidence type="ECO:0000305" key="5"/>
<keyword id="KW-1015">Disulfide bond</keyword>
<keyword id="KW-0325">Glycoprotein</keyword>
<keyword id="KW-0430">Lectin</keyword>
<keyword id="KW-1185">Reference proteome</keyword>
<keyword id="KW-0964">Secreted</keyword>
<keyword id="KW-0732">Signal</keyword>
<dbReference type="EMBL" id="Z79759">
    <property type="protein sequence ID" value="CAB02136.1"/>
    <property type="molecule type" value="Genomic_DNA"/>
</dbReference>
<dbReference type="PIR" id="T28053">
    <property type="entry name" value="T28053"/>
</dbReference>
<dbReference type="RefSeq" id="NP_492448.1">
    <property type="nucleotide sequence ID" value="NM_060047.5"/>
</dbReference>
<dbReference type="SMR" id="Q94417"/>
<dbReference type="BioGRID" id="38167">
    <property type="interactions" value="9"/>
</dbReference>
<dbReference type="FunCoup" id="Q94417">
    <property type="interactions" value="54"/>
</dbReference>
<dbReference type="STRING" id="6239.ZK858.3.1"/>
<dbReference type="GlyCosmos" id="Q94417">
    <property type="glycosylation" value="1 site, No reported glycans"/>
</dbReference>
<dbReference type="iPTMnet" id="Q94417"/>
<dbReference type="PaxDb" id="6239-ZK858.3"/>
<dbReference type="PeptideAtlas" id="Q94417"/>
<dbReference type="EnsemblMetazoa" id="ZK858.3.1">
    <property type="protein sequence ID" value="ZK858.3.1"/>
    <property type="gene ID" value="WBGene00014117"/>
</dbReference>
<dbReference type="GeneID" id="172736"/>
<dbReference type="KEGG" id="cel:CELE_ZK858.3"/>
<dbReference type="UCSC" id="ZK858.3">
    <property type="organism name" value="c. elegans"/>
</dbReference>
<dbReference type="AGR" id="WB:WBGene00014117"/>
<dbReference type="CTD" id="172736"/>
<dbReference type="WormBase" id="ZK858.3">
    <property type="protein sequence ID" value="CE15425"/>
    <property type="gene ID" value="WBGene00014117"/>
    <property type="gene designation" value="clec-91"/>
</dbReference>
<dbReference type="eggNOG" id="KOG4297">
    <property type="taxonomic scope" value="Eukaryota"/>
</dbReference>
<dbReference type="GeneTree" id="ENSGT00970000196041"/>
<dbReference type="HOGENOM" id="CLU_093598_0_0_1"/>
<dbReference type="InParanoid" id="Q94417"/>
<dbReference type="OMA" id="KAERKCY"/>
<dbReference type="OrthoDB" id="6133475at2759"/>
<dbReference type="PhylomeDB" id="Q94417"/>
<dbReference type="Reactome" id="R-CEL-1236978">
    <property type="pathway name" value="Cross-presentation of soluble exogenous antigens (endosomes)"/>
</dbReference>
<dbReference type="Reactome" id="R-CEL-446203">
    <property type="pathway name" value="Asparagine N-linked glycosylation"/>
</dbReference>
<dbReference type="Reactome" id="R-CEL-5621480">
    <property type="pathway name" value="Dectin-2 family"/>
</dbReference>
<dbReference type="Reactome" id="R-CEL-6798695">
    <property type="pathway name" value="Neutrophil degranulation"/>
</dbReference>
<dbReference type="PRO" id="PR:Q94417"/>
<dbReference type="Proteomes" id="UP000001940">
    <property type="component" value="Chromosome I"/>
</dbReference>
<dbReference type="Bgee" id="WBGene00014117">
    <property type="expression patterns" value="Expressed in germ line (C elegans) and 4 other cell types or tissues"/>
</dbReference>
<dbReference type="GO" id="GO:0009897">
    <property type="term" value="C:external side of plasma membrane"/>
    <property type="evidence" value="ECO:0000318"/>
    <property type="project" value="GO_Central"/>
</dbReference>
<dbReference type="GO" id="GO:0005576">
    <property type="term" value="C:extracellular region"/>
    <property type="evidence" value="ECO:0007669"/>
    <property type="project" value="UniProtKB-SubCell"/>
</dbReference>
<dbReference type="GO" id="GO:0030246">
    <property type="term" value="F:carbohydrate binding"/>
    <property type="evidence" value="ECO:0000318"/>
    <property type="project" value="GO_Central"/>
</dbReference>
<dbReference type="GO" id="GO:0038187">
    <property type="term" value="F:pattern recognition receptor activity"/>
    <property type="evidence" value="ECO:0000318"/>
    <property type="project" value="GO_Central"/>
</dbReference>
<dbReference type="GO" id="GO:0006955">
    <property type="term" value="P:immune response"/>
    <property type="evidence" value="ECO:0000318"/>
    <property type="project" value="GO_Central"/>
</dbReference>
<dbReference type="Gene3D" id="3.10.100.10">
    <property type="entry name" value="Mannose-Binding Protein A, subunit A"/>
    <property type="match status" value="1"/>
</dbReference>
<dbReference type="InterPro" id="IPR001304">
    <property type="entry name" value="C-type_lectin-like"/>
</dbReference>
<dbReference type="InterPro" id="IPR016186">
    <property type="entry name" value="C-type_lectin-like/link_sf"/>
</dbReference>
<dbReference type="InterPro" id="IPR050828">
    <property type="entry name" value="C-type_lectin/matrix_domain"/>
</dbReference>
<dbReference type="InterPro" id="IPR016187">
    <property type="entry name" value="CTDL_fold"/>
</dbReference>
<dbReference type="PANTHER" id="PTHR45710">
    <property type="entry name" value="C-TYPE LECTIN DOMAIN-CONTAINING PROTEIN 180"/>
    <property type="match status" value="1"/>
</dbReference>
<dbReference type="PANTHER" id="PTHR45710:SF26">
    <property type="entry name" value="RH26557P"/>
    <property type="match status" value="1"/>
</dbReference>
<dbReference type="Pfam" id="PF00059">
    <property type="entry name" value="Lectin_C"/>
    <property type="match status" value="1"/>
</dbReference>
<dbReference type="SMART" id="SM00034">
    <property type="entry name" value="CLECT"/>
    <property type="match status" value="1"/>
</dbReference>
<dbReference type="SUPFAM" id="SSF56436">
    <property type="entry name" value="C-type lectin-like"/>
    <property type="match status" value="1"/>
</dbReference>
<dbReference type="PROSITE" id="PS50041">
    <property type="entry name" value="C_TYPE_LECTIN_2"/>
    <property type="match status" value="1"/>
</dbReference>
<feature type="signal peptide" evidence="1">
    <location>
        <begin position="1"/>
        <end position="21"/>
    </location>
</feature>
<feature type="chain" id="PRO_0000248424" description="C-type lectin domain-containing protein 91">
    <location>
        <begin position="22"/>
        <end position="225"/>
    </location>
</feature>
<feature type="domain" description="C-type lectin" evidence="2">
    <location>
        <begin position="85"/>
        <end position="215"/>
    </location>
</feature>
<feature type="glycosylation site" description="N-linked (GlcNAc...) asparagine" evidence="3 4">
    <location>
        <position position="217"/>
    </location>
</feature>
<feature type="disulfide bond" evidence="2">
    <location>
        <begin position="106"/>
        <end position="214"/>
    </location>
</feature>
<feature type="disulfide bond" evidence="2">
    <location>
        <begin position="185"/>
        <end position="206"/>
    </location>
</feature>
<reference key="1">
    <citation type="journal article" date="1998" name="Science">
        <title>Genome sequence of the nematode C. elegans: a platform for investigating biology.</title>
        <authorList>
            <consortium name="The C. elegans sequencing consortium"/>
        </authorList>
    </citation>
    <scope>NUCLEOTIDE SEQUENCE [LARGE SCALE GENOMIC DNA]</scope>
    <source>
        <strain>Bristol N2</strain>
    </source>
</reference>
<reference key="2">
    <citation type="journal article" date="2003" name="Nat. Biotechnol.">
        <title>Lectin affinity capture, isotope-coded tagging and mass spectrometry to identify N-linked glycoproteins.</title>
        <authorList>
            <person name="Kaji H."/>
            <person name="Saito H."/>
            <person name="Yamauchi Y."/>
            <person name="Shinkawa T."/>
            <person name="Taoka M."/>
            <person name="Hirabayashi J."/>
            <person name="Kasai K."/>
            <person name="Takahashi N."/>
            <person name="Isobe T."/>
        </authorList>
    </citation>
    <scope>GLYCOSYLATION [LARGE SCALE ANALYSIS] AT ASN-217</scope>
    <scope>IDENTIFICATION BY MASS SPECTROMETRY</scope>
    <source>
        <strain>Bristol N2</strain>
    </source>
</reference>
<reference key="3">
    <citation type="journal article" date="2007" name="Mol. Cell. Proteomics">
        <title>Proteomics reveals N-linked glycoprotein diversity in Caenorhabditis elegans and suggests an atypical translocation mechanism for integral membrane proteins.</title>
        <authorList>
            <person name="Kaji H."/>
            <person name="Kamiie J."/>
            <person name="Kawakami H."/>
            <person name="Kido K."/>
            <person name="Yamauchi Y."/>
            <person name="Shinkawa T."/>
            <person name="Taoka M."/>
            <person name="Takahashi N."/>
            <person name="Isobe T."/>
        </authorList>
    </citation>
    <scope>GLYCOSYLATION [LARGE SCALE ANALYSIS] AT ASN-217</scope>
    <scope>IDENTIFICATION BY MASS SPECTROMETRY</scope>
    <source>
        <strain>Bristol N2</strain>
    </source>
</reference>
<organism>
    <name type="scientific">Caenorhabditis elegans</name>
    <dbReference type="NCBI Taxonomy" id="6239"/>
    <lineage>
        <taxon>Eukaryota</taxon>
        <taxon>Metazoa</taxon>
        <taxon>Ecdysozoa</taxon>
        <taxon>Nematoda</taxon>
        <taxon>Chromadorea</taxon>
        <taxon>Rhabditida</taxon>
        <taxon>Rhabditina</taxon>
        <taxon>Rhabditomorpha</taxon>
        <taxon>Rhabditoidea</taxon>
        <taxon>Rhabditidae</taxon>
        <taxon>Peloderinae</taxon>
        <taxon>Caenorhabditis</taxon>
    </lineage>
</organism>